<protein>
    <recommendedName>
        <fullName evidence="1">Pantothenate synthetase</fullName>
        <shortName evidence="1">PS</shortName>
        <ecNumber evidence="1">6.3.2.1</ecNumber>
    </recommendedName>
    <alternativeName>
        <fullName evidence="1">Pantoate--beta-alanine ligase</fullName>
    </alternativeName>
    <alternativeName>
        <fullName evidence="1">Pantoate-activating enzyme</fullName>
    </alternativeName>
</protein>
<name>PANC_STAES</name>
<sequence>MTKVITTINEMQSIVKQHQREGKTIGFVPTMGALHDGHLTMMKQSVSENDLTVISIFVNPLQFGPNEDFDAYPRQLDDDVAAVKKLQVDYVFHPSVDEMYPEELGIHLKVGHLAQVLEGAQRPGHFEGVVTVVNKLFNIVQPDYAYFGKKDAQQLAIVEKMVKDFNLPVHVIGIDIVREKDGLAKSSRNIYLTSEERKEAKHLYQSLRLAKNLYEAGERDSNEIIGQIAAYLNKNISGHIDDLGIYSYPNLIQQSKIHGRIFISLAVKFSKARLIDNIIIGDDYID</sequence>
<comment type="function">
    <text evidence="1">Catalyzes the condensation of pantoate with beta-alanine in an ATP-dependent reaction via a pantoyl-adenylate intermediate.</text>
</comment>
<comment type="catalytic activity">
    <reaction evidence="1">
        <text>(R)-pantoate + beta-alanine + ATP = (R)-pantothenate + AMP + diphosphate + H(+)</text>
        <dbReference type="Rhea" id="RHEA:10912"/>
        <dbReference type="ChEBI" id="CHEBI:15378"/>
        <dbReference type="ChEBI" id="CHEBI:15980"/>
        <dbReference type="ChEBI" id="CHEBI:29032"/>
        <dbReference type="ChEBI" id="CHEBI:30616"/>
        <dbReference type="ChEBI" id="CHEBI:33019"/>
        <dbReference type="ChEBI" id="CHEBI:57966"/>
        <dbReference type="ChEBI" id="CHEBI:456215"/>
        <dbReference type="EC" id="6.3.2.1"/>
    </reaction>
</comment>
<comment type="pathway">
    <text evidence="1">Cofactor biosynthesis; (R)-pantothenate biosynthesis; (R)-pantothenate from (R)-pantoate and beta-alanine: step 1/1.</text>
</comment>
<comment type="subunit">
    <text evidence="1">Homodimer.</text>
</comment>
<comment type="subcellular location">
    <subcellularLocation>
        <location evidence="1">Cytoplasm</location>
    </subcellularLocation>
</comment>
<comment type="miscellaneous">
    <text evidence="1">The reaction proceeds by a bi uni uni bi ping pong mechanism.</text>
</comment>
<comment type="similarity">
    <text evidence="1">Belongs to the pantothenate synthetase family.</text>
</comment>
<dbReference type="EC" id="6.3.2.1" evidence="1"/>
<dbReference type="EMBL" id="AE015929">
    <property type="protein sequence ID" value="AAO05782.1"/>
    <property type="molecule type" value="Genomic_DNA"/>
</dbReference>
<dbReference type="RefSeq" id="NP_765695.1">
    <property type="nucleotide sequence ID" value="NC_004461.1"/>
</dbReference>
<dbReference type="RefSeq" id="WP_001830610.1">
    <property type="nucleotide sequence ID" value="NZ_WBME01000005.1"/>
</dbReference>
<dbReference type="SMR" id="Q8CR21"/>
<dbReference type="GeneID" id="50017782"/>
<dbReference type="KEGG" id="sep:SE_2140"/>
<dbReference type="PATRIC" id="fig|176280.10.peg.2092"/>
<dbReference type="eggNOG" id="COG0414">
    <property type="taxonomic scope" value="Bacteria"/>
</dbReference>
<dbReference type="HOGENOM" id="CLU_047148_0_0_9"/>
<dbReference type="OrthoDB" id="9773087at2"/>
<dbReference type="UniPathway" id="UPA00028">
    <property type="reaction ID" value="UER00005"/>
</dbReference>
<dbReference type="Proteomes" id="UP000001411">
    <property type="component" value="Chromosome"/>
</dbReference>
<dbReference type="GO" id="GO:0005829">
    <property type="term" value="C:cytosol"/>
    <property type="evidence" value="ECO:0007669"/>
    <property type="project" value="TreeGrafter"/>
</dbReference>
<dbReference type="GO" id="GO:0005524">
    <property type="term" value="F:ATP binding"/>
    <property type="evidence" value="ECO:0007669"/>
    <property type="project" value="UniProtKB-KW"/>
</dbReference>
<dbReference type="GO" id="GO:0004592">
    <property type="term" value="F:pantoate-beta-alanine ligase activity"/>
    <property type="evidence" value="ECO:0007669"/>
    <property type="project" value="UniProtKB-UniRule"/>
</dbReference>
<dbReference type="GO" id="GO:0015940">
    <property type="term" value="P:pantothenate biosynthetic process"/>
    <property type="evidence" value="ECO:0007669"/>
    <property type="project" value="UniProtKB-UniRule"/>
</dbReference>
<dbReference type="CDD" id="cd00560">
    <property type="entry name" value="PanC"/>
    <property type="match status" value="1"/>
</dbReference>
<dbReference type="FunFam" id="3.30.1300.10:FF:000001">
    <property type="entry name" value="Pantothenate synthetase"/>
    <property type="match status" value="1"/>
</dbReference>
<dbReference type="FunFam" id="3.40.50.620:FF:000013">
    <property type="entry name" value="Pantothenate synthetase"/>
    <property type="match status" value="1"/>
</dbReference>
<dbReference type="Gene3D" id="3.40.50.620">
    <property type="entry name" value="HUPs"/>
    <property type="match status" value="1"/>
</dbReference>
<dbReference type="Gene3D" id="3.30.1300.10">
    <property type="entry name" value="Pantoate-beta-alanine ligase, C-terminal domain"/>
    <property type="match status" value="1"/>
</dbReference>
<dbReference type="HAMAP" id="MF_00158">
    <property type="entry name" value="PanC"/>
    <property type="match status" value="1"/>
</dbReference>
<dbReference type="InterPro" id="IPR003721">
    <property type="entry name" value="Pantoate_ligase"/>
</dbReference>
<dbReference type="InterPro" id="IPR042176">
    <property type="entry name" value="Pantoate_ligase_C"/>
</dbReference>
<dbReference type="InterPro" id="IPR014729">
    <property type="entry name" value="Rossmann-like_a/b/a_fold"/>
</dbReference>
<dbReference type="NCBIfam" id="TIGR00018">
    <property type="entry name" value="panC"/>
    <property type="match status" value="1"/>
</dbReference>
<dbReference type="PANTHER" id="PTHR21299">
    <property type="entry name" value="CYTIDYLATE KINASE/PANTOATE-BETA-ALANINE LIGASE"/>
    <property type="match status" value="1"/>
</dbReference>
<dbReference type="PANTHER" id="PTHR21299:SF1">
    <property type="entry name" value="PANTOATE--BETA-ALANINE LIGASE"/>
    <property type="match status" value="1"/>
</dbReference>
<dbReference type="Pfam" id="PF02569">
    <property type="entry name" value="Pantoate_ligase"/>
    <property type="match status" value="1"/>
</dbReference>
<dbReference type="SUPFAM" id="SSF52374">
    <property type="entry name" value="Nucleotidylyl transferase"/>
    <property type="match status" value="1"/>
</dbReference>
<evidence type="ECO:0000255" key="1">
    <source>
        <dbReference type="HAMAP-Rule" id="MF_00158"/>
    </source>
</evidence>
<feature type="chain" id="PRO_0000128275" description="Pantothenate synthetase">
    <location>
        <begin position="1"/>
        <end position="286"/>
    </location>
</feature>
<feature type="active site" description="Proton donor" evidence="1">
    <location>
        <position position="38"/>
    </location>
</feature>
<feature type="binding site" evidence="1">
    <location>
        <begin position="31"/>
        <end position="38"/>
    </location>
    <ligand>
        <name>ATP</name>
        <dbReference type="ChEBI" id="CHEBI:30616"/>
    </ligand>
</feature>
<feature type="binding site" evidence="1">
    <location>
        <position position="62"/>
    </location>
    <ligand>
        <name>(R)-pantoate</name>
        <dbReference type="ChEBI" id="CHEBI:15980"/>
    </ligand>
</feature>
<feature type="binding site" evidence="1">
    <location>
        <position position="62"/>
    </location>
    <ligand>
        <name>beta-alanine</name>
        <dbReference type="ChEBI" id="CHEBI:57966"/>
    </ligand>
</feature>
<feature type="binding site" evidence="1">
    <location>
        <begin position="148"/>
        <end position="151"/>
    </location>
    <ligand>
        <name>ATP</name>
        <dbReference type="ChEBI" id="CHEBI:30616"/>
    </ligand>
</feature>
<feature type="binding site" evidence="1">
    <location>
        <position position="154"/>
    </location>
    <ligand>
        <name>(R)-pantoate</name>
        <dbReference type="ChEBI" id="CHEBI:15980"/>
    </ligand>
</feature>
<feature type="binding site" evidence="1">
    <location>
        <position position="177"/>
    </location>
    <ligand>
        <name>ATP</name>
        <dbReference type="ChEBI" id="CHEBI:30616"/>
    </ligand>
</feature>
<feature type="binding site" evidence="1">
    <location>
        <begin position="185"/>
        <end position="188"/>
    </location>
    <ligand>
        <name>ATP</name>
        <dbReference type="ChEBI" id="CHEBI:30616"/>
    </ligand>
</feature>
<reference key="1">
    <citation type="journal article" date="2003" name="Mol. Microbiol.">
        <title>Genome-based analysis of virulence genes in a non-biofilm-forming Staphylococcus epidermidis strain (ATCC 12228).</title>
        <authorList>
            <person name="Zhang Y.-Q."/>
            <person name="Ren S.-X."/>
            <person name="Li H.-L."/>
            <person name="Wang Y.-X."/>
            <person name="Fu G."/>
            <person name="Yang J."/>
            <person name="Qin Z.-Q."/>
            <person name="Miao Y.-G."/>
            <person name="Wang W.-Y."/>
            <person name="Chen R.-S."/>
            <person name="Shen Y."/>
            <person name="Chen Z."/>
            <person name="Yuan Z.-H."/>
            <person name="Zhao G.-P."/>
            <person name="Qu D."/>
            <person name="Danchin A."/>
            <person name="Wen Y.-M."/>
        </authorList>
    </citation>
    <scope>NUCLEOTIDE SEQUENCE [LARGE SCALE GENOMIC DNA]</scope>
    <source>
        <strain>ATCC 12228 / FDA PCI 1200</strain>
    </source>
</reference>
<gene>
    <name evidence="1" type="primary">panC</name>
    <name type="ordered locus">SE_2140</name>
</gene>
<organism>
    <name type="scientific">Staphylococcus epidermidis (strain ATCC 12228 / FDA PCI 1200)</name>
    <dbReference type="NCBI Taxonomy" id="176280"/>
    <lineage>
        <taxon>Bacteria</taxon>
        <taxon>Bacillati</taxon>
        <taxon>Bacillota</taxon>
        <taxon>Bacilli</taxon>
        <taxon>Bacillales</taxon>
        <taxon>Staphylococcaceae</taxon>
        <taxon>Staphylococcus</taxon>
    </lineage>
</organism>
<accession>Q8CR21</accession>
<keyword id="KW-0067">ATP-binding</keyword>
<keyword id="KW-0963">Cytoplasm</keyword>
<keyword id="KW-0436">Ligase</keyword>
<keyword id="KW-0547">Nucleotide-binding</keyword>
<keyword id="KW-0566">Pantothenate biosynthesis</keyword>
<proteinExistence type="inferred from homology"/>